<gene>
    <name evidence="1" type="primary">purM</name>
    <name type="ordered locus">LBUL_1333</name>
</gene>
<organism>
    <name type="scientific">Lactobacillus delbrueckii subsp. bulgaricus (strain ATCC BAA-365 / Lb-18)</name>
    <dbReference type="NCBI Taxonomy" id="321956"/>
    <lineage>
        <taxon>Bacteria</taxon>
        <taxon>Bacillati</taxon>
        <taxon>Bacillota</taxon>
        <taxon>Bacilli</taxon>
        <taxon>Lactobacillales</taxon>
        <taxon>Lactobacillaceae</taxon>
        <taxon>Lactobacillus</taxon>
    </lineage>
</organism>
<proteinExistence type="inferred from homology"/>
<feature type="chain" id="PRO_1000046442" description="Phosphoribosylformylglycinamidine cyclo-ligase">
    <location>
        <begin position="1"/>
        <end position="349"/>
    </location>
</feature>
<keyword id="KW-0067">ATP-binding</keyword>
<keyword id="KW-0963">Cytoplasm</keyword>
<keyword id="KW-0436">Ligase</keyword>
<keyword id="KW-0547">Nucleotide-binding</keyword>
<keyword id="KW-0658">Purine biosynthesis</keyword>
<accession>Q049L9</accession>
<name>PUR5_LACDB</name>
<sequence>MIVNRYKDAGVDVNAGYELVRRIKGAVASTKRPGYVGNIGGFGGLFDLDSLGYDHPVLVSGTDGVGTKLIIAQKMDKNDTVGIDVVAMCVNDVLAQGAEPLFFLDYIACGHNDPALLASVVQGVAEGCKQAGASLIGGETAEMPDMYAPDEYDLAGFTVGVAEKDRLLSVDTPQAGDVLLGLASSGVHSNGFSLVRKILFKDHDVKLTDKPAELKGKSVGESLLAPTRIYIKSVLPLIKQGLVHGVAHITGGGLIENVPRMFNDGLRAEIAAGSWEVPDIFNYLKQVGNLSDDDCWQTFNMGLGMILAVPADKKEEAKQLLLASGEKVFEVGHLSERTDGEKIFIKLVE</sequence>
<protein>
    <recommendedName>
        <fullName evidence="1">Phosphoribosylformylglycinamidine cyclo-ligase</fullName>
        <ecNumber evidence="1">6.3.3.1</ecNumber>
    </recommendedName>
    <alternativeName>
        <fullName evidence="1">AIR synthase</fullName>
    </alternativeName>
    <alternativeName>
        <fullName evidence="1">AIRS</fullName>
    </alternativeName>
    <alternativeName>
        <fullName evidence="1">Phosphoribosyl-aminoimidazole synthetase</fullName>
    </alternativeName>
</protein>
<comment type="catalytic activity">
    <reaction evidence="1">
        <text>2-formamido-N(1)-(5-O-phospho-beta-D-ribosyl)acetamidine + ATP = 5-amino-1-(5-phospho-beta-D-ribosyl)imidazole + ADP + phosphate + H(+)</text>
        <dbReference type="Rhea" id="RHEA:23032"/>
        <dbReference type="ChEBI" id="CHEBI:15378"/>
        <dbReference type="ChEBI" id="CHEBI:30616"/>
        <dbReference type="ChEBI" id="CHEBI:43474"/>
        <dbReference type="ChEBI" id="CHEBI:137981"/>
        <dbReference type="ChEBI" id="CHEBI:147287"/>
        <dbReference type="ChEBI" id="CHEBI:456216"/>
        <dbReference type="EC" id="6.3.3.1"/>
    </reaction>
</comment>
<comment type="pathway">
    <text evidence="1">Purine metabolism; IMP biosynthesis via de novo pathway; 5-amino-1-(5-phospho-D-ribosyl)imidazole from N(2)-formyl-N(1)-(5-phospho-D-ribosyl)glycinamide: step 2/2.</text>
</comment>
<comment type="subcellular location">
    <subcellularLocation>
        <location evidence="1">Cytoplasm</location>
    </subcellularLocation>
</comment>
<comment type="similarity">
    <text evidence="1">Belongs to the AIR synthase family.</text>
</comment>
<evidence type="ECO:0000255" key="1">
    <source>
        <dbReference type="HAMAP-Rule" id="MF_00741"/>
    </source>
</evidence>
<dbReference type="EC" id="6.3.3.1" evidence="1"/>
<dbReference type="EMBL" id="CP000412">
    <property type="protein sequence ID" value="ABJ58853.1"/>
    <property type="molecule type" value="Genomic_DNA"/>
</dbReference>
<dbReference type="SMR" id="Q049L9"/>
<dbReference type="KEGG" id="lbu:LBUL_1333"/>
<dbReference type="HOGENOM" id="CLU_047116_0_0_9"/>
<dbReference type="UniPathway" id="UPA00074">
    <property type="reaction ID" value="UER00129"/>
</dbReference>
<dbReference type="GO" id="GO:0005829">
    <property type="term" value="C:cytosol"/>
    <property type="evidence" value="ECO:0007669"/>
    <property type="project" value="TreeGrafter"/>
</dbReference>
<dbReference type="GO" id="GO:0005524">
    <property type="term" value="F:ATP binding"/>
    <property type="evidence" value="ECO:0007669"/>
    <property type="project" value="UniProtKB-KW"/>
</dbReference>
<dbReference type="GO" id="GO:0004637">
    <property type="term" value="F:phosphoribosylamine-glycine ligase activity"/>
    <property type="evidence" value="ECO:0007669"/>
    <property type="project" value="TreeGrafter"/>
</dbReference>
<dbReference type="GO" id="GO:0004641">
    <property type="term" value="F:phosphoribosylformylglycinamidine cyclo-ligase activity"/>
    <property type="evidence" value="ECO:0007669"/>
    <property type="project" value="UniProtKB-UniRule"/>
</dbReference>
<dbReference type="GO" id="GO:0006189">
    <property type="term" value="P:'de novo' IMP biosynthetic process"/>
    <property type="evidence" value="ECO:0007669"/>
    <property type="project" value="UniProtKB-UniRule"/>
</dbReference>
<dbReference type="GO" id="GO:0046084">
    <property type="term" value="P:adenine biosynthetic process"/>
    <property type="evidence" value="ECO:0007669"/>
    <property type="project" value="TreeGrafter"/>
</dbReference>
<dbReference type="CDD" id="cd02196">
    <property type="entry name" value="PurM"/>
    <property type="match status" value="1"/>
</dbReference>
<dbReference type="FunFam" id="3.30.1330.10:FF:000001">
    <property type="entry name" value="Phosphoribosylformylglycinamidine cyclo-ligase"/>
    <property type="match status" value="1"/>
</dbReference>
<dbReference type="FunFam" id="3.90.650.10:FF:000011">
    <property type="entry name" value="Phosphoribosylformylglycinamidine cyclo-ligase"/>
    <property type="match status" value="1"/>
</dbReference>
<dbReference type="Gene3D" id="3.90.650.10">
    <property type="entry name" value="PurM-like C-terminal domain"/>
    <property type="match status" value="1"/>
</dbReference>
<dbReference type="Gene3D" id="3.30.1330.10">
    <property type="entry name" value="PurM-like, N-terminal domain"/>
    <property type="match status" value="1"/>
</dbReference>
<dbReference type="HAMAP" id="MF_00741">
    <property type="entry name" value="AIRS"/>
    <property type="match status" value="1"/>
</dbReference>
<dbReference type="InterPro" id="IPR010918">
    <property type="entry name" value="PurM-like_C_dom"/>
</dbReference>
<dbReference type="InterPro" id="IPR036676">
    <property type="entry name" value="PurM-like_C_sf"/>
</dbReference>
<dbReference type="InterPro" id="IPR016188">
    <property type="entry name" value="PurM-like_N"/>
</dbReference>
<dbReference type="InterPro" id="IPR036921">
    <property type="entry name" value="PurM-like_N_sf"/>
</dbReference>
<dbReference type="InterPro" id="IPR004733">
    <property type="entry name" value="PurM_cligase"/>
</dbReference>
<dbReference type="NCBIfam" id="TIGR00878">
    <property type="entry name" value="purM"/>
    <property type="match status" value="1"/>
</dbReference>
<dbReference type="PANTHER" id="PTHR10520:SF12">
    <property type="entry name" value="TRIFUNCTIONAL PURINE BIOSYNTHETIC PROTEIN ADENOSINE-3"/>
    <property type="match status" value="1"/>
</dbReference>
<dbReference type="PANTHER" id="PTHR10520">
    <property type="entry name" value="TRIFUNCTIONAL PURINE BIOSYNTHETIC PROTEIN ADENOSINE-3-RELATED"/>
    <property type="match status" value="1"/>
</dbReference>
<dbReference type="Pfam" id="PF00586">
    <property type="entry name" value="AIRS"/>
    <property type="match status" value="1"/>
</dbReference>
<dbReference type="Pfam" id="PF02769">
    <property type="entry name" value="AIRS_C"/>
    <property type="match status" value="1"/>
</dbReference>
<dbReference type="SUPFAM" id="SSF56042">
    <property type="entry name" value="PurM C-terminal domain-like"/>
    <property type="match status" value="1"/>
</dbReference>
<dbReference type="SUPFAM" id="SSF55326">
    <property type="entry name" value="PurM N-terminal domain-like"/>
    <property type="match status" value="1"/>
</dbReference>
<reference key="1">
    <citation type="journal article" date="2006" name="Proc. Natl. Acad. Sci. U.S.A.">
        <title>Comparative genomics of the lactic acid bacteria.</title>
        <authorList>
            <person name="Makarova K.S."/>
            <person name="Slesarev A."/>
            <person name="Wolf Y.I."/>
            <person name="Sorokin A."/>
            <person name="Mirkin B."/>
            <person name="Koonin E.V."/>
            <person name="Pavlov A."/>
            <person name="Pavlova N."/>
            <person name="Karamychev V."/>
            <person name="Polouchine N."/>
            <person name="Shakhova V."/>
            <person name="Grigoriev I."/>
            <person name="Lou Y."/>
            <person name="Rohksar D."/>
            <person name="Lucas S."/>
            <person name="Huang K."/>
            <person name="Goodstein D.M."/>
            <person name="Hawkins T."/>
            <person name="Plengvidhya V."/>
            <person name="Welker D."/>
            <person name="Hughes J."/>
            <person name="Goh Y."/>
            <person name="Benson A."/>
            <person name="Baldwin K."/>
            <person name="Lee J.-H."/>
            <person name="Diaz-Muniz I."/>
            <person name="Dosti B."/>
            <person name="Smeianov V."/>
            <person name="Wechter W."/>
            <person name="Barabote R."/>
            <person name="Lorca G."/>
            <person name="Altermann E."/>
            <person name="Barrangou R."/>
            <person name="Ganesan B."/>
            <person name="Xie Y."/>
            <person name="Rawsthorne H."/>
            <person name="Tamir D."/>
            <person name="Parker C."/>
            <person name="Breidt F."/>
            <person name="Broadbent J.R."/>
            <person name="Hutkins R."/>
            <person name="O'Sullivan D."/>
            <person name="Steele J."/>
            <person name="Unlu G."/>
            <person name="Saier M.H. Jr."/>
            <person name="Klaenhammer T."/>
            <person name="Richardson P."/>
            <person name="Kozyavkin S."/>
            <person name="Weimer B.C."/>
            <person name="Mills D.A."/>
        </authorList>
    </citation>
    <scope>NUCLEOTIDE SEQUENCE [LARGE SCALE GENOMIC DNA]</scope>
    <source>
        <strain>ATCC BAA-365 / Lb-18</strain>
    </source>
</reference>